<reference key="1">
    <citation type="journal article" date="2011" name="Stand. Genomic Sci.">
        <title>Complete genome sequence of Calditerrivibrio nitroreducens type strain (Yu37-1).</title>
        <authorList>
            <person name="Pitluck S."/>
            <person name="Sikorski J."/>
            <person name="Zeytun A."/>
            <person name="Lapidus A."/>
            <person name="Nolan M."/>
            <person name="Lucas S."/>
            <person name="Hammon N."/>
            <person name="Deshpande S."/>
            <person name="Cheng J.F."/>
            <person name="Tapia R."/>
            <person name="Han C."/>
            <person name="Goodwin L."/>
            <person name="Liolios K."/>
            <person name="Pagani I."/>
            <person name="Ivanova N."/>
            <person name="Mavromatis K."/>
            <person name="Pati A."/>
            <person name="Chen A."/>
            <person name="Palaniappan K."/>
            <person name="Hauser L."/>
            <person name="Chang Y.J."/>
            <person name="Jeffries C.D."/>
            <person name="Detter J.C."/>
            <person name="Brambilla E."/>
            <person name="Djao O.D."/>
            <person name="Rohde M."/>
            <person name="Spring S."/>
            <person name="Goker M."/>
            <person name="Woyke T."/>
            <person name="Bristow J."/>
            <person name="Eisen J.A."/>
            <person name="Markowitz V."/>
            <person name="Hugenholtz P."/>
            <person name="Kyrpides N.C."/>
            <person name="Klenk H.P."/>
            <person name="Land M."/>
        </authorList>
    </citation>
    <scope>NUCLEOTIDE SEQUENCE [LARGE SCALE GENOMIC DNA]</scope>
    <source>
        <strain>DSM 19672 / NBRC 101217 / Yu37-1</strain>
    </source>
</reference>
<protein>
    <recommendedName>
        <fullName evidence="1">Protein translocase subunit SecD</fullName>
    </recommendedName>
</protein>
<organism>
    <name type="scientific">Calditerrivibrio nitroreducens (strain DSM 19672 / NBRC 101217 / Yu37-1)</name>
    <dbReference type="NCBI Taxonomy" id="768670"/>
    <lineage>
        <taxon>Bacteria</taxon>
        <taxon>Pseudomonadati</taxon>
        <taxon>Deferribacterota</taxon>
        <taxon>Deferribacteres</taxon>
        <taxon>Deferribacterales</taxon>
        <taxon>Calditerrivibrionaceae</taxon>
    </lineage>
</organism>
<name>SECD_CALNY</name>
<dbReference type="EMBL" id="CP002347">
    <property type="protein sequence ID" value="ADR19150.1"/>
    <property type="molecule type" value="Genomic_DNA"/>
</dbReference>
<dbReference type="RefSeq" id="WP_013451362.1">
    <property type="nucleotide sequence ID" value="NC_014758.1"/>
</dbReference>
<dbReference type="SMR" id="E4TJ18"/>
<dbReference type="STRING" id="768670.Calni_1242"/>
<dbReference type="KEGG" id="cni:Calni_1242"/>
<dbReference type="eggNOG" id="COG0342">
    <property type="taxonomic scope" value="Bacteria"/>
</dbReference>
<dbReference type="HOGENOM" id="CLU_007894_4_3_0"/>
<dbReference type="OrthoDB" id="9805019at2"/>
<dbReference type="Proteomes" id="UP000007039">
    <property type="component" value="Chromosome"/>
</dbReference>
<dbReference type="GO" id="GO:0005886">
    <property type="term" value="C:plasma membrane"/>
    <property type="evidence" value="ECO:0007669"/>
    <property type="project" value="UniProtKB-SubCell"/>
</dbReference>
<dbReference type="GO" id="GO:0015450">
    <property type="term" value="F:protein-transporting ATPase activity"/>
    <property type="evidence" value="ECO:0007669"/>
    <property type="project" value="InterPro"/>
</dbReference>
<dbReference type="GO" id="GO:0065002">
    <property type="term" value="P:intracellular protein transmembrane transport"/>
    <property type="evidence" value="ECO:0007669"/>
    <property type="project" value="UniProtKB-UniRule"/>
</dbReference>
<dbReference type="GO" id="GO:0006605">
    <property type="term" value="P:protein targeting"/>
    <property type="evidence" value="ECO:0007669"/>
    <property type="project" value="UniProtKB-UniRule"/>
</dbReference>
<dbReference type="GO" id="GO:0043952">
    <property type="term" value="P:protein transport by the Sec complex"/>
    <property type="evidence" value="ECO:0007669"/>
    <property type="project" value="UniProtKB-UniRule"/>
</dbReference>
<dbReference type="FunFam" id="3.30.1360.200:FF:000002">
    <property type="entry name" value="Preprotein translocase subunit SecD"/>
    <property type="match status" value="1"/>
</dbReference>
<dbReference type="FunFam" id="1.20.1640.10:FF:000004">
    <property type="entry name" value="Protein translocase subunit SecD"/>
    <property type="match status" value="1"/>
</dbReference>
<dbReference type="Gene3D" id="3.30.1360.200">
    <property type="match status" value="1"/>
</dbReference>
<dbReference type="Gene3D" id="3.30.70.3400">
    <property type="match status" value="2"/>
</dbReference>
<dbReference type="Gene3D" id="1.20.1640.10">
    <property type="entry name" value="Multidrug efflux transporter AcrB transmembrane domain"/>
    <property type="match status" value="1"/>
</dbReference>
<dbReference type="HAMAP" id="MF_01463_B">
    <property type="entry name" value="SecD_B"/>
    <property type="match status" value="1"/>
</dbReference>
<dbReference type="InterPro" id="IPR001036">
    <property type="entry name" value="Acrflvin-R"/>
</dbReference>
<dbReference type="InterPro" id="IPR005791">
    <property type="entry name" value="SecD"/>
</dbReference>
<dbReference type="InterPro" id="IPR022813">
    <property type="entry name" value="SecD/SecF_arch_bac"/>
</dbReference>
<dbReference type="InterPro" id="IPR048631">
    <property type="entry name" value="SecD_1st"/>
</dbReference>
<dbReference type="InterPro" id="IPR048634">
    <property type="entry name" value="SecD_SecF_C"/>
</dbReference>
<dbReference type="InterPro" id="IPR055344">
    <property type="entry name" value="SecD_SecF_C_bact"/>
</dbReference>
<dbReference type="InterPro" id="IPR054384">
    <property type="entry name" value="SecDF_P1_head"/>
</dbReference>
<dbReference type="NCBIfam" id="TIGR00916">
    <property type="entry name" value="2A0604s01"/>
    <property type="match status" value="1"/>
</dbReference>
<dbReference type="NCBIfam" id="TIGR01129">
    <property type="entry name" value="secD"/>
    <property type="match status" value="1"/>
</dbReference>
<dbReference type="PANTHER" id="PTHR30081:SF1">
    <property type="entry name" value="PROTEIN TRANSLOCASE SUBUNIT SECD"/>
    <property type="match status" value="1"/>
</dbReference>
<dbReference type="PANTHER" id="PTHR30081">
    <property type="entry name" value="PROTEIN-EXPORT MEMBRANE PROTEIN SEC"/>
    <property type="match status" value="1"/>
</dbReference>
<dbReference type="Pfam" id="PF21760">
    <property type="entry name" value="SecD_1st"/>
    <property type="match status" value="1"/>
</dbReference>
<dbReference type="Pfam" id="PF02355">
    <property type="entry name" value="SecD_SecF_C"/>
    <property type="match status" value="1"/>
</dbReference>
<dbReference type="Pfam" id="PF22599">
    <property type="entry name" value="SecDF_P1_head"/>
    <property type="match status" value="1"/>
</dbReference>
<dbReference type="PRINTS" id="PR00702">
    <property type="entry name" value="ACRIFLAVINRP"/>
</dbReference>
<dbReference type="SUPFAM" id="SSF82866">
    <property type="entry name" value="Multidrug efflux transporter AcrB transmembrane domain"/>
    <property type="match status" value="1"/>
</dbReference>
<accession>E4TJ18</accession>
<evidence type="ECO:0000255" key="1">
    <source>
        <dbReference type="HAMAP-Rule" id="MF_01463"/>
    </source>
</evidence>
<keyword id="KW-0997">Cell inner membrane</keyword>
<keyword id="KW-1003">Cell membrane</keyword>
<keyword id="KW-0472">Membrane</keyword>
<keyword id="KW-0653">Protein transport</keyword>
<keyword id="KW-1185">Reference proteome</keyword>
<keyword id="KW-0811">Translocation</keyword>
<keyword id="KW-0812">Transmembrane</keyword>
<keyword id="KW-1133">Transmembrane helix</keyword>
<keyword id="KW-0813">Transport</keyword>
<proteinExistence type="inferred from homology"/>
<sequence>MQLKLRWITILIVFVVSLFFMFPLDKRINLGLDLKGGMHVILGVETEKAVQAKIDTLTGQIRKELRNSKINFAFVQKNESGKISIGLSDPAERNKVKDLISKNYPILKESGLNSDEKVIELSLDTDEVKRIKDYAVEQAVQVIRNRVDQFGVNEPVIQRQGKEHILVQLAGITDPERAVKLIGKTAQLKFYLLDENANNEETIKSGNIPPDDIILYGKKIDKVTGQIVSTIPYVLKKDAVLTGDYLLEAEVRISSQFNEPYVSIKFDPAGSKIFEEITAENVNKRMAIVLDDNVYSAPVIRERIAGGEAQISGSFTLEEAKDLAIVLRAGSLPAPVKILENRTIGPSLGQDSIKKGIWAGIIGVAAVIIFMLIYYKFSGFIASIALLSNAIIILGAMGMFKATLTLPGIAGLILTMGMAIDANVLIFERIREELRLGRTPMNALEAGFEKAMSTIIDSNITTLIAGLVLFQFGTGPVKGFAVTLTIGILSSIFTAVTLSKTIFLTLYGNKEIKKLSV</sequence>
<comment type="function">
    <text evidence="1">Part of the Sec protein translocase complex. Interacts with the SecYEG preprotein conducting channel. SecDF uses the proton motive force (PMF) to complete protein translocation after the ATP-dependent function of SecA.</text>
</comment>
<comment type="subunit">
    <text evidence="1">Forms a complex with SecF. Part of the essential Sec protein translocation apparatus which comprises SecA, SecYEG and auxiliary proteins SecDF. Other proteins may also be involved.</text>
</comment>
<comment type="subcellular location">
    <subcellularLocation>
        <location evidence="1">Cell inner membrane</location>
        <topology evidence="1">Multi-pass membrane protein</topology>
    </subcellularLocation>
</comment>
<comment type="similarity">
    <text evidence="1">Belongs to the SecD/SecF family. SecD subfamily.</text>
</comment>
<feature type="chain" id="PRO_5000662456" description="Protein translocase subunit SecD">
    <location>
        <begin position="1"/>
        <end position="517"/>
    </location>
</feature>
<feature type="transmembrane region" description="Helical" evidence="1">
    <location>
        <begin position="5"/>
        <end position="25"/>
    </location>
</feature>
<feature type="transmembrane region" description="Helical" evidence="1">
    <location>
        <begin position="357"/>
        <end position="377"/>
    </location>
</feature>
<feature type="transmembrane region" description="Helical" evidence="1">
    <location>
        <begin position="380"/>
        <end position="400"/>
    </location>
</feature>
<feature type="transmembrane region" description="Helical" evidence="1">
    <location>
        <begin position="407"/>
        <end position="427"/>
    </location>
</feature>
<feature type="transmembrane region" description="Helical" evidence="1">
    <location>
        <begin position="455"/>
        <end position="475"/>
    </location>
</feature>
<feature type="transmembrane region" description="Helical" evidence="1">
    <location>
        <begin position="479"/>
        <end position="499"/>
    </location>
</feature>
<gene>
    <name evidence="1" type="primary">secD</name>
    <name type="ordered locus">Calni_1242</name>
</gene>